<accession>Q58DR6</accession>
<accession>A0JNM3</accession>
<dbReference type="EMBL" id="BT021531">
    <property type="protein sequence ID" value="AAX46378.1"/>
    <property type="molecule type" value="mRNA"/>
</dbReference>
<dbReference type="EMBL" id="BC126787">
    <property type="protein sequence ID" value="AAI26788.1"/>
    <property type="molecule type" value="mRNA"/>
</dbReference>
<dbReference type="RefSeq" id="NP_001019733.1">
    <property type="nucleotide sequence ID" value="NM_001024562.1"/>
</dbReference>
<dbReference type="RefSeq" id="XP_015313659.1">
    <property type="nucleotide sequence ID" value="XM_015458173.1"/>
</dbReference>
<dbReference type="SMR" id="Q58DR6"/>
<dbReference type="FunCoup" id="Q58DR6">
    <property type="interactions" value="226"/>
</dbReference>
<dbReference type="STRING" id="9913.ENSBTAP00000023976"/>
<dbReference type="GlyCosmos" id="Q58DR6">
    <property type="glycosylation" value="2 sites, No reported glycans"/>
</dbReference>
<dbReference type="GlyGen" id="Q58DR6">
    <property type="glycosylation" value="2 sites"/>
</dbReference>
<dbReference type="PaxDb" id="9913-ENSBTAP00000023976"/>
<dbReference type="Ensembl" id="ENSBTAT00000023976.3">
    <property type="protein sequence ID" value="ENSBTAP00000023976.2"/>
    <property type="gene ID" value="ENSBTAG00000018013.3"/>
</dbReference>
<dbReference type="GeneID" id="535273"/>
<dbReference type="KEGG" id="bta:535273"/>
<dbReference type="CTD" id="2014"/>
<dbReference type="VEuPathDB" id="HostDB:ENSBTAG00000018013"/>
<dbReference type="VGNC" id="VGNC:28483">
    <property type="gene designation" value="EMP3"/>
</dbReference>
<dbReference type="eggNOG" id="ENOG502RZP6">
    <property type="taxonomic scope" value="Eukaryota"/>
</dbReference>
<dbReference type="GeneTree" id="ENSGT00950000182696"/>
<dbReference type="HOGENOM" id="CLU_138632_1_0_1"/>
<dbReference type="InParanoid" id="Q58DR6"/>
<dbReference type="OMA" id="CRFDNFT"/>
<dbReference type="OrthoDB" id="8714888at2759"/>
<dbReference type="TreeFam" id="TF330414"/>
<dbReference type="Proteomes" id="UP000009136">
    <property type="component" value="Chromosome 18"/>
</dbReference>
<dbReference type="Bgee" id="ENSBTAG00000018013">
    <property type="expression patterns" value="Expressed in blood and 103 other cell types or tissues"/>
</dbReference>
<dbReference type="GO" id="GO:0005886">
    <property type="term" value="C:plasma membrane"/>
    <property type="evidence" value="ECO:0000318"/>
    <property type="project" value="GO_Central"/>
</dbReference>
<dbReference type="GO" id="GO:0006915">
    <property type="term" value="P:apoptotic process"/>
    <property type="evidence" value="ECO:0007669"/>
    <property type="project" value="Ensembl"/>
</dbReference>
<dbReference type="GO" id="GO:0032060">
    <property type="term" value="P:bleb assembly"/>
    <property type="evidence" value="ECO:0007669"/>
    <property type="project" value="Ensembl"/>
</dbReference>
<dbReference type="FunFam" id="1.20.140.150:FF:000016">
    <property type="entry name" value="Epithelial membrane protein 3"/>
    <property type="match status" value="1"/>
</dbReference>
<dbReference type="Gene3D" id="1.20.140.150">
    <property type="match status" value="1"/>
</dbReference>
<dbReference type="InterPro" id="IPR003934">
    <property type="entry name" value="EMP_3"/>
</dbReference>
<dbReference type="InterPro" id="IPR050579">
    <property type="entry name" value="PMP-22/EMP/MP20-like"/>
</dbReference>
<dbReference type="InterPro" id="IPR004031">
    <property type="entry name" value="PMP22/EMP/MP20/Claudin"/>
</dbReference>
<dbReference type="InterPro" id="IPR004032">
    <property type="entry name" value="PMP22_EMP_MP20"/>
</dbReference>
<dbReference type="PANTHER" id="PTHR10671:SF8">
    <property type="entry name" value="EPITHELIAL MEMBRANE PROTEIN 3"/>
    <property type="match status" value="1"/>
</dbReference>
<dbReference type="PANTHER" id="PTHR10671">
    <property type="entry name" value="EPITHELIAL MEMBRANE PROTEIN-RELATED"/>
    <property type="match status" value="1"/>
</dbReference>
<dbReference type="Pfam" id="PF00822">
    <property type="entry name" value="PMP22_Claudin"/>
    <property type="match status" value="1"/>
</dbReference>
<dbReference type="PRINTS" id="PR01453">
    <property type="entry name" value="EPMEMFAMILY"/>
</dbReference>
<dbReference type="PRINTS" id="PR01456">
    <property type="entry name" value="EPMEMPROT3"/>
</dbReference>
<dbReference type="PROSITE" id="PS01221">
    <property type="entry name" value="PMP22_1"/>
    <property type="match status" value="1"/>
</dbReference>
<dbReference type="PROSITE" id="PS01222">
    <property type="entry name" value="PMP22_2"/>
    <property type="match status" value="1"/>
</dbReference>
<protein>
    <recommendedName>
        <fullName>Epithelial membrane protein 3</fullName>
        <shortName>EMP-3</shortName>
    </recommendedName>
</protein>
<gene>
    <name type="primary">EMP3</name>
</gene>
<feature type="chain" id="PRO_0000244414" description="Epithelial membrane protein 3">
    <location>
        <begin position="1"/>
        <end position="163"/>
    </location>
</feature>
<feature type="transmembrane region" description="Helical" evidence="2">
    <location>
        <begin position="4"/>
        <end position="24"/>
    </location>
</feature>
<feature type="transmembrane region" description="Helical" evidence="2">
    <location>
        <begin position="66"/>
        <end position="86"/>
    </location>
</feature>
<feature type="transmembrane region" description="Helical" evidence="2">
    <location>
        <begin position="100"/>
        <end position="120"/>
    </location>
</feature>
<feature type="transmembrane region" description="Helical" evidence="2">
    <location>
        <begin position="139"/>
        <end position="159"/>
    </location>
</feature>
<feature type="glycosylation site" description="N-linked (GlcNAc...) asparagine" evidence="2">
    <location>
        <position position="49"/>
    </location>
</feature>
<feature type="glycosylation site" description="N-linked (GlcNAc...) asparagine" evidence="2">
    <location>
        <position position="56"/>
    </location>
</feature>
<comment type="function">
    <text evidence="1">Probably involved in cell proliferation and cell-cell interactions.</text>
</comment>
<comment type="subcellular location">
    <subcellularLocation>
        <location evidence="1">Membrane</location>
        <topology evidence="1">Multi-pass membrane protein</topology>
    </subcellularLocation>
</comment>
<comment type="similarity">
    <text evidence="3">Belongs to the PMP-22/EMP/MP20 family.</text>
</comment>
<sequence length="163" mass="18300">MSLLLLVVSALHILILILLFVATLDKSWWTLPGKESLNLWYDCTWNSDNKTWACSNVSENGWLKAVQVLMVLSLILCCLSFILFMFQLYTMRRGGLFYATGFCQLCTSVAVFTGALIYAIHAEEILADRPSGGSFGYCFALAWVAFPLALASGIIYIHLRKRE</sequence>
<proteinExistence type="evidence at transcript level"/>
<evidence type="ECO:0000250" key="1"/>
<evidence type="ECO:0000255" key="2"/>
<evidence type="ECO:0000305" key="3"/>
<keyword id="KW-0325">Glycoprotein</keyword>
<keyword id="KW-0472">Membrane</keyword>
<keyword id="KW-1185">Reference proteome</keyword>
<keyword id="KW-0812">Transmembrane</keyword>
<keyword id="KW-1133">Transmembrane helix</keyword>
<organism>
    <name type="scientific">Bos taurus</name>
    <name type="common">Bovine</name>
    <dbReference type="NCBI Taxonomy" id="9913"/>
    <lineage>
        <taxon>Eukaryota</taxon>
        <taxon>Metazoa</taxon>
        <taxon>Chordata</taxon>
        <taxon>Craniata</taxon>
        <taxon>Vertebrata</taxon>
        <taxon>Euteleostomi</taxon>
        <taxon>Mammalia</taxon>
        <taxon>Eutheria</taxon>
        <taxon>Laurasiatheria</taxon>
        <taxon>Artiodactyla</taxon>
        <taxon>Ruminantia</taxon>
        <taxon>Pecora</taxon>
        <taxon>Bovidae</taxon>
        <taxon>Bovinae</taxon>
        <taxon>Bos</taxon>
    </lineage>
</organism>
<name>EMP3_BOVIN</name>
<reference key="1">
    <citation type="journal article" date="2005" name="BMC Genomics">
        <title>Characterization of 954 bovine full-CDS cDNA sequences.</title>
        <authorList>
            <person name="Harhay G.P."/>
            <person name="Sonstegard T.S."/>
            <person name="Keele J.W."/>
            <person name="Heaton M.P."/>
            <person name="Clawson M.L."/>
            <person name="Snelling W.M."/>
            <person name="Wiedmann R.T."/>
            <person name="Van Tassell C.P."/>
            <person name="Smith T.P.L."/>
        </authorList>
    </citation>
    <scope>NUCLEOTIDE SEQUENCE [LARGE SCALE MRNA]</scope>
</reference>
<reference key="2">
    <citation type="submission" date="2006-10" db="EMBL/GenBank/DDBJ databases">
        <authorList>
            <consortium name="NIH - Mammalian Gene Collection (MGC) project"/>
        </authorList>
    </citation>
    <scope>NUCLEOTIDE SEQUENCE [LARGE SCALE MRNA]</scope>
    <source>
        <strain>Hereford</strain>
        <tissue>Fetal medulla</tissue>
    </source>
</reference>